<name>GRCA_ECO81</name>
<reference key="1">
    <citation type="journal article" date="2009" name="PLoS Genet.">
        <title>Organised genome dynamics in the Escherichia coli species results in highly diverse adaptive paths.</title>
        <authorList>
            <person name="Touchon M."/>
            <person name="Hoede C."/>
            <person name="Tenaillon O."/>
            <person name="Barbe V."/>
            <person name="Baeriswyl S."/>
            <person name="Bidet P."/>
            <person name="Bingen E."/>
            <person name="Bonacorsi S."/>
            <person name="Bouchier C."/>
            <person name="Bouvet O."/>
            <person name="Calteau A."/>
            <person name="Chiapello H."/>
            <person name="Clermont O."/>
            <person name="Cruveiller S."/>
            <person name="Danchin A."/>
            <person name="Diard M."/>
            <person name="Dossat C."/>
            <person name="Karoui M.E."/>
            <person name="Frapy E."/>
            <person name="Garry L."/>
            <person name="Ghigo J.M."/>
            <person name="Gilles A.M."/>
            <person name="Johnson J."/>
            <person name="Le Bouguenec C."/>
            <person name="Lescat M."/>
            <person name="Mangenot S."/>
            <person name="Martinez-Jehanne V."/>
            <person name="Matic I."/>
            <person name="Nassif X."/>
            <person name="Oztas S."/>
            <person name="Petit M.A."/>
            <person name="Pichon C."/>
            <person name="Rouy Z."/>
            <person name="Ruf C.S."/>
            <person name="Schneider D."/>
            <person name="Tourret J."/>
            <person name="Vacherie B."/>
            <person name="Vallenet D."/>
            <person name="Medigue C."/>
            <person name="Rocha E.P.C."/>
            <person name="Denamur E."/>
        </authorList>
    </citation>
    <scope>NUCLEOTIDE SEQUENCE [LARGE SCALE GENOMIC DNA]</scope>
    <source>
        <strain>ED1a</strain>
    </source>
</reference>
<keyword id="KW-0007">Acetylation</keyword>
<keyword id="KW-0556">Organic radical</keyword>
<accession>B7MYL2</accession>
<proteinExistence type="inferred from homology"/>
<sequence length="127" mass="14284">MITGIQITKAANDDLLNSFWLLDSEKGEARCIVAKAGYAEDEVVAVSKLGDIEYREVPVEVKPEVRVEGGQHLNVNVLRRETLEDAVKHPEKYPQLTIRVSGYAVRFNSLTPEQQRDVIARTFTESL</sequence>
<organism>
    <name type="scientific">Escherichia coli O81 (strain ED1a)</name>
    <dbReference type="NCBI Taxonomy" id="585397"/>
    <lineage>
        <taxon>Bacteria</taxon>
        <taxon>Pseudomonadati</taxon>
        <taxon>Pseudomonadota</taxon>
        <taxon>Gammaproteobacteria</taxon>
        <taxon>Enterobacterales</taxon>
        <taxon>Enterobacteriaceae</taxon>
        <taxon>Escherichia</taxon>
    </lineage>
</organism>
<dbReference type="EMBL" id="CU928162">
    <property type="protein sequence ID" value="CAR09178.2"/>
    <property type="molecule type" value="Genomic_DNA"/>
</dbReference>
<dbReference type="RefSeq" id="WP_000627807.1">
    <property type="nucleotide sequence ID" value="NC_011745.1"/>
</dbReference>
<dbReference type="SMR" id="B7MYL2"/>
<dbReference type="GeneID" id="93774507"/>
<dbReference type="KEGG" id="ecq:ECED1_3010"/>
<dbReference type="HOGENOM" id="CLU_133780_0_0_6"/>
<dbReference type="Proteomes" id="UP000000748">
    <property type="component" value="Chromosome"/>
</dbReference>
<dbReference type="GO" id="GO:0005829">
    <property type="term" value="C:cytosol"/>
    <property type="evidence" value="ECO:0007669"/>
    <property type="project" value="TreeGrafter"/>
</dbReference>
<dbReference type="GO" id="GO:0008861">
    <property type="term" value="F:formate C-acetyltransferase activity"/>
    <property type="evidence" value="ECO:0007669"/>
    <property type="project" value="TreeGrafter"/>
</dbReference>
<dbReference type="FunFam" id="3.20.70.20:FF:000002">
    <property type="entry name" value="Autonomous glycyl radical cofactor"/>
    <property type="match status" value="1"/>
</dbReference>
<dbReference type="Gene3D" id="3.20.70.20">
    <property type="match status" value="1"/>
</dbReference>
<dbReference type="HAMAP" id="MF_00806">
    <property type="entry name" value="GrcA"/>
    <property type="match status" value="1"/>
</dbReference>
<dbReference type="InterPro" id="IPR050244">
    <property type="entry name" value="Auton_GlycylRad_Cofactor"/>
</dbReference>
<dbReference type="InterPro" id="IPR019777">
    <property type="entry name" value="Form_AcTrfase_GR_CS"/>
</dbReference>
<dbReference type="InterPro" id="IPR001150">
    <property type="entry name" value="Gly_radical"/>
</dbReference>
<dbReference type="InterPro" id="IPR011140">
    <property type="entry name" value="Glycyl_radical_cofactor_GrcA"/>
</dbReference>
<dbReference type="NCBIfam" id="TIGR04365">
    <property type="entry name" value="spare_glycyl"/>
    <property type="match status" value="1"/>
</dbReference>
<dbReference type="PANTHER" id="PTHR30191">
    <property type="entry name" value="FORMATE ACETYLTRANSFERASE"/>
    <property type="match status" value="1"/>
</dbReference>
<dbReference type="PANTHER" id="PTHR30191:SF0">
    <property type="entry name" value="FORMATE ACETYLTRANSFERASE 1"/>
    <property type="match status" value="1"/>
</dbReference>
<dbReference type="Pfam" id="PF01228">
    <property type="entry name" value="Gly_radical"/>
    <property type="match status" value="1"/>
</dbReference>
<dbReference type="PIRSF" id="PIRSF000378">
    <property type="entry name" value="Gly_radicl_yfiD"/>
    <property type="match status" value="1"/>
</dbReference>
<dbReference type="SUPFAM" id="SSF51998">
    <property type="entry name" value="PFL-like glycyl radical enzymes"/>
    <property type="match status" value="1"/>
</dbReference>
<dbReference type="PROSITE" id="PS00850">
    <property type="entry name" value="GLY_RADICAL_1"/>
    <property type="match status" value="1"/>
</dbReference>
<dbReference type="PROSITE" id="PS51149">
    <property type="entry name" value="GLY_RADICAL_2"/>
    <property type="match status" value="1"/>
</dbReference>
<protein>
    <recommendedName>
        <fullName evidence="1">Autonomous glycyl radical cofactor</fullName>
    </recommendedName>
</protein>
<comment type="function">
    <text evidence="1">Acts as a radical domain for damaged PFL and possibly other radical proteins.</text>
</comment>
<feature type="chain" id="PRO_1000148569" description="Autonomous glycyl radical cofactor">
    <location>
        <begin position="1"/>
        <end position="127"/>
    </location>
</feature>
<feature type="domain" description="Glycine radical" evidence="1">
    <location>
        <begin position="5"/>
        <end position="127"/>
    </location>
</feature>
<feature type="modified residue" description="N6-acetyllysine" evidence="1">
    <location>
        <position position="48"/>
    </location>
</feature>
<feature type="modified residue" description="N6-acetyllysine" evidence="1">
    <location>
        <position position="88"/>
    </location>
</feature>
<feature type="modified residue" description="N6-acetyllysine" evidence="1">
    <location>
        <position position="92"/>
    </location>
</feature>
<feature type="modified residue" description="Glycine radical" evidence="1">
    <location>
        <position position="102"/>
    </location>
</feature>
<gene>
    <name evidence="1" type="primary">grcA</name>
    <name type="ordered locus">ECED1_3010</name>
</gene>
<evidence type="ECO:0000255" key="1">
    <source>
        <dbReference type="HAMAP-Rule" id="MF_00806"/>
    </source>
</evidence>